<gene>
    <name evidence="1" type="primary">macB</name>
    <name type="ordered locus">Bcep18194_B0724</name>
</gene>
<keyword id="KW-0046">Antibiotic resistance</keyword>
<keyword id="KW-0067">ATP-binding</keyword>
<keyword id="KW-0997">Cell inner membrane</keyword>
<keyword id="KW-1003">Cell membrane</keyword>
<keyword id="KW-0472">Membrane</keyword>
<keyword id="KW-0547">Nucleotide-binding</keyword>
<keyword id="KW-1278">Translocase</keyword>
<keyword id="KW-0812">Transmembrane</keyword>
<keyword id="KW-1133">Transmembrane helix</keyword>
<keyword id="KW-0813">Transport</keyword>
<reference key="1">
    <citation type="submission" date="2005-10" db="EMBL/GenBank/DDBJ databases">
        <title>Complete sequence of chromosome 2 of Burkholderia sp. 383.</title>
        <authorList>
            <consortium name="US DOE Joint Genome Institute"/>
            <person name="Copeland A."/>
            <person name="Lucas S."/>
            <person name="Lapidus A."/>
            <person name="Barry K."/>
            <person name="Detter J.C."/>
            <person name="Glavina T."/>
            <person name="Hammon N."/>
            <person name="Israni S."/>
            <person name="Pitluck S."/>
            <person name="Chain P."/>
            <person name="Malfatti S."/>
            <person name="Shin M."/>
            <person name="Vergez L."/>
            <person name="Schmutz J."/>
            <person name="Larimer F."/>
            <person name="Land M."/>
            <person name="Kyrpides N."/>
            <person name="Lykidis A."/>
            <person name="Richardson P."/>
        </authorList>
    </citation>
    <scope>NUCLEOTIDE SEQUENCE [LARGE SCALE GENOMIC DNA]</scope>
    <source>
        <strain>ATCC 17760 / DSM 23089 / LMG 22485 / NCIMB 9086 / R18194 / 383</strain>
    </source>
</reference>
<organism>
    <name type="scientific">Burkholderia lata (strain ATCC 17760 / DSM 23089 / LMG 22485 / NCIMB 9086 / R18194 / 383)</name>
    <dbReference type="NCBI Taxonomy" id="482957"/>
    <lineage>
        <taxon>Bacteria</taxon>
        <taxon>Pseudomonadati</taxon>
        <taxon>Pseudomonadota</taxon>
        <taxon>Betaproteobacteria</taxon>
        <taxon>Burkholderiales</taxon>
        <taxon>Burkholderiaceae</taxon>
        <taxon>Burkholderia</taxon>
        <taxon>Burkholderia cepacia complex</taxon>
    </lineage>
</organism>
<feature type="chain" id="PRO_0000269931" description="Macrolide export ATP-binding/permease protein MacB">
    <location>
        <begin position="1"/>
        <end position="687"/>
    </location>
</feature>
<feature type="transmembrane region" description="Helical" evidence="1">
    <location>
        <begin position="312"/>
        <end position="332"/>
    </location>
</feature>
<feature type="transmembrane region" description="Helical" evidence="1">
    <location>
        <begin position="560"/>
        <end position="580"/>
    </location>
</feature>
<feature type="transmembrane region" description="Helical" evidence="1">
    <location>
        <begin position="617"/>
        <end position="637"/>
    </location>
</feature>
<feature type="transmembrane region" description="Helical" evidence="1">
    <location>
        <begin position="650"/>
        <end position="670"/>
    </location>
</feature>
<feature type="domain" description="ABC transporter" evidence="1">
    <location>
        <begin position="6"/>
        <end position="244"/>
    </location>
</feature>
<feature type="region of interest" description="Disordered" evidence="2">
    <location>
        <begin position="246"/>
        <end position="281"/>
    </location>
</feature>
<feature type="compositionally biased region" description="Low complexity" evidence="2">
    <location>
        <begin position="246"/>
        <end position="256"/>
    </location>
</feature>
<feature type="binding site" evidence="1">
    <location>
        <begin position="42"/>
        <end position="49"/>
    </location>
    <ligand>
        <name>ATP</name>
        <dbReference type="ChEBI" id="CHEBI:30616"/>
    </ligand>
</feature>
<name>MACB_BURL3</name>
<dbReference type="EC" id="7.6.2.-" evidence="1"/>
<dbReference type="EMBL" id="CP000152">
    <property type="protein sequence ID" value="ABB10838.1"/>
    <property type="molecule type" value="Genomic_DNA"/>
</dbReference>
<dbReference type="RefSeq" id="WP_011354332.1">
    <property type="nucleotide sequence ID" value="NC_007511.1"/>
</dbReference>
<dbReference type="SMR" id="Q399M3"/>
<dbReference type="GeneID" id="45097092"/>
<dbReference type="KEGG" id="bur:Bcep18194_B0724"/>
<dbReference type="PATRIC" id="fig|482957.22.peg.4342"/>
<dbReference type="HOGENOM" id="CLU_000604_78_1_4"/>
<dbReference type="Proteomes" id="UP000002705">
    <property type="component" value="Chromosome 2"/>
</dbReference>
<dbReference type="GO" id="GO:0005886">
    <property type="term" value="C:plasma membrane"/>
    <property type="evidence" value="ECO:0007669"/>
    <property type="project" value="UniProtKB-SubCell"/>
</dbReference>
<dbReference type="GO" id="GO:0005524">
    <property type="term" value="F:ATP binding"/>
    <property type="evidence" value="ECO:0007669"/>
    <property type="project" value="UniProtKB-KW"/>
</dbReference>
<dbReference type="GO" id="GO:0016887">
    <property type="term" value="F:ATP hydrolysis activity"/>
    <property type="evidence" value="ECO:0007669"/>
    <property type="project" value="InterPro"/>
</dbReference>
<dbReference type="GO" id="GO:0022857">
    <property type="term" value="F:transmembrane transporter activity"/>
    <property type="evidence" value="ECO:0007669"/>
    <property type="project" value="TreeGrafter"/>
</dbReference>
<dbReference type="GO" id="GO:0046677">
    <property type="term" value="P:response to antibiotic"/>
    <property type="evidence" value="ECO:0007669"/>
    <property type="project" value="UniProtKB-KW"/>
</dbReference>
<dbReference type="CDD" id="cd03255">
    <property type="entry name" value="ABC_MJ0796_LolCDE_FtsE"/>
    <property type="match status" value="1"/>
</dbReference>
<dbReference type="FunFam" id="3.40.50.300:FF:000032">
    <property type="entry name" value="Export ABC transporter ATP-binding protein"/>
    <property type="match status" value="1"/>
</dbReference>
<dbReference type="Gene3D" id="3.40.50.300">
    <property type="entry name" value="P-loop containing nucleotide triphosphate hydrolases"/>
    <property type="match status" value="1"/>
</dbReference>
<dbReference type="InterPro" id="IPR003593">
    <property type="entry name" value="AAA+_ATPase"/>
</dbReference>
<dbReference type="InterPro" id="IPR003838">
    <property type="entry name" value="ABC3_permease_C"/>
</dbReference>
<dbReference type="InterPro" id="IPR003439">
    <property type="entry name" value="ABC_transporter-like_ATP-bd"/>
</dbReference>
<dbReference type="InterPro" id="IPR017871">
    <property type="entry name" value="ABC_transporter-like_CS"/>
</dbReference>
<dbReference type="InterPro" id="IPR017911">
    <property type="entry name" value="MacB-like_ATP-bd"/>
</dbReference>
<dbReference type="InterPro" id="IPR025857">
    <property type="entry name" value="MacB_PCD"/>
</dbReference>
<dbReference type="InterPro" id="IPR050250">
    <property type="entry name" value="Macrolide_Exporter_MacB"/>
</dbReference>
<dbReference type="InterPro" id="IPR027417">
    <property type="entry name" value="P-loop_NTPase"/>
</dbReference>
<dbReference type="PANTHER" id="PTHR30572:SF7">
    <property type="entry name" value="MACROLIDE EXPORT ATP-BINDING_PERMEASE PROTEIN MACB"/>
    <property type="match status" value="1"/>
</dbReference>
<dbReference type="PANTHER" id="PTHR30572">
    <property type="entry name" value="MEMBRANE COMPONENT OF TRANSPORTER-RELATED"/>
    <property type="match status" value="1"/>
</dbReference>
<dbReference type="Pfam" id="PF00005">
    <property type="entry name" value="ABC_tran"/>
    <property type="match status" value="1"/>
</dbReference>
<dbReference type="Pfam" id="PF02687">
    <property type="entry name" value="FtsX"/>
    <property type="match status" value="1"/>
</dbReference>
<dbReference type="Pfam" id="PF12704">
    <property type="entry name" value="MacB_PCD"/>
    <property type="match status" value="1"/>
</dbReference>
<dbReference type="SMART" id="SM00382">
    <property type="entry name" value="AAA"/>
    <property type="match status" value="1"/>
</dbReference>
<dbReference type="SUPFAM" id="SSF52540">
    <property type="entry name" value="P-loop containing nucleoside triphosphate hydrolases"/>
    <property type="match status" value="1"/>
</dbReference>
<dbReference type="PROSITE" id="PS00211">
    <property type="entry name" value="ABC_TRANSPORTER_1"/>
    <property type="match status" value="1"/>
</dbReference>
<dbReference type="PROSITE" id="PS50893">
    <property type="entry name" value="ABC_TRANSPORTER_2"/>
    <property type="match status" value="1"/>
</dbReference>
<dbReference type="PROSITE" id="PS51267">
    <property type="entry name" value="MACB"/>
    <property type="match status" value="1"/>
</dbReference>
<protein>
    <recommendedName>
        <fullName evidence="1">Macrolide export ATP-binding/permease protein MacB</fullName>
        <ecNumber evidence="1">7.6.2.-</ecNumber>
    </recommendedName>
</protein>
<evidence type="ECO:0000255" key="1">
    <source>
        <dbReference type="HAMAP-Rule" id="MF_01720"/>
    </source>
</evidence>
<evidence type="ECO:0000256" key="2">
    <source>
        <dbReference type="SAM" id="MobiDB-lite"/>
    </source>
</evidence>
<comment type="function">
    <text evidence="1">Non-canonical ABC transporter that contains transmembrane domains (TMD), which form a pore in the inner membrane, and an ATP-binding domain (NBD), which is responsible for energy generation. Confers resistance against macrolides.</text>
</comment>
<comment type="subunit">
    <text evidence="1">Homodimer.</text>
</comment>
<comment type="subcellular location">
    <subcellularLocation>
        <location evidence="1">Cell inner membrane</location>
        <topology evidence="1">Multi-pass membrane protein</topology>
    </subcellularLocation>
</comment>
<comment type="similarity">
    <text evidence="1">Belongs to the ABC transporter superfamily. Macrolide exporter (TC 3.A.1.122) family.</text>
</comment>
<accession>Q399M3</accession>
<proteinExistence type="inferred from homology"/>
<sequence length="687" mass="74008">MRQPLLKLAAVTRRFPAGDKDVVVLNNVNLSIHAGEIVAIVGASGSGKSTLMNILGCLDHPSEGTYTVGGRDTHMLDSDELAQLRREHFGFVFQRYHLLPHVDAVANLEMPAIYAGTPRAERHARARELLARLGLADRAHHRPGQLSGGQQQRVSIARALMNGGQVILADEPTGALDTKSGQDVIRILHELNALGHTIVIVTHDKAVARHAKRIIEISDGEIVADRPNRHYAEALAEAGVDAAEAAEASEAAVGESPTRNRHDTPAPPAAVDTDPHVDTGTRTRRFAAGSGRFAEACRMAWIALVSHRLRTLLTMLGIIIGITSVVSIVAIGEGAKRYMLDEIGSIGTNTINIYPGTDWGDSRADAIQTLVPADVAALTEQPYVDSATPETSRTLLLRYRNVDVNALVSGVGDRFFQARGMRFALGVAFDEDAVRRQVQVAVIDQNTRRKLFGATRNPIGEVILVDNVPCVVIGVTADKKSAFGSVKSLNVWVPYTTASGRLFGQRYLDSITVRVRDGQPSAAAEKSLEKLMTQRHGRKDFFTYNMDSVVKTVEKTGQSLTLLLSLIAVISLVVGGIGVMNIMLVSVTERTREIGIRMAVGARQSDILQQFLVEAVLVCLLGGTIGIALSFGLGALFSMFVAQWKMVFSAGAIVTAFVCSTLTGVIFGFMPARNASRLDPIDALARD</sequence>